<feature type="chain" id="PRO_1000133865" description="Large ribosomal subunit protein bL12">
    <location>
        <begin position="1"/>
        <end position="121"/>
    </location>
</feature>
<reference key="1">
    <citation type="journal article" date="2009" name="BMC Genomics">
        <title>Evidence for niche adaptation in the genome of the bovine pathogen Streptococcus uberis.</title>
        <authorList>
            <person name="Ward P.N."/>
            <person name="Holden M.T.G."/>
            <person name="Leigh J.A."/>
            <person name="Lennard N."/>
            <person name="Bignell A."/>
            <person name="Barron A."/>
            <person name="Clark L."/>
            <person name="Quail M.A."/>
            <person name="Woodward J."/>
            <person name="Barrell B.G."/>
            <person name="Egan S.A."/>
            <person name="Field T.R."/>
            <person name="Maskell D."/>
            <person name="Kehoe M."/>
            <person name="Dowson C.G."/>
            <person name="Chanter N."/>
            <person name="Whatmore A.M."/>
            <person name="Bentley S.D."/>
            <person name="Parkhill J."/>
        </authorList>
    </citation>
    <scope>NUCLEOTIDE SEQUENCE [LARGE SCALE GENOMIC DNA]</scope>
    <source>
        <strain>ATCC BAA-854 / 0140J</strain>
    </source>
</reference>
<gene>
    <name evidence="1" type="primary">rplL</name>
    <name type="ordered locus">SUB0778</name>
</gene>
<accession>B9DU78</accession>
<comment type="function">
    <text evidence="1">Forms part of the ribosomal stalk which helps the ribosome interact with GTP-bound translation factors. Is thus essential for accurate translation.</text>
</comment>
<comment type="subunit">
    <text evidence="1">Homodimer. Part of the ribosomal stalk of the 50S ribosomal subunit. Forms a multimeric L10(L12)X complex, where L10 forms an elongated spine to which 2 to 4 L12 dimers bind in a sequential fashion. Binds GTP-bound translation factors.</text>
</comment>
<comment type="similarity">
    <text evidence="1">Belongs to the bacterial ribosomal protein bL12 family.</text>
</comment>
<keyword id="KW-1185">Reference proteome</keyword>
<keyword id="KW-0687">Ribonucleoprotein</keyword>
<keyword id="KW-0689">Ribosomal protein</keyword>
<proteinExistence type="inferred from homology"/>
<protein>
    <recommendedName>
        <fullName evidence="1">Large ribosomal subunit protein bL12</fullName>
    </recommendedName>
    <alternativeName>
        <fullName evidence="2">50S ribosomal protein L7/L12</fullName>
    </alternativeName>
</protein>
<name>RL7_STRU0</name>
<organism>
    <name type="scientific">Streptococcus uberis (strain ATCC BAA-854 / 0140J)</name>
    <dbReference type="NCBI Taxonomy" id="218495"/>
    <lineage>
        <taxon>Bacteria</taxon>
        <taxon>Bacillati</taxon>
        <taxon>Bacillota</taxon>
        <taxon>Bacilli</taxon>
        <taxon>Lactobacillales</taxon>
        <taxon>Streptococcaceae</taxon>
        <taxon>Streptococcus</taxon>
    </lineage>
</organism>
<sequence>MALNIENIIAEIKEASILELNDLVKAIEEEFGVTAAAPVAAVAAGGAEEATKDSFDVELTAAGDKKVGVIKAVREITGLGLKEAKGLVDGAPANIKEGVAAAEAEEIKAKLEEAGATITLK</sequence>
<dbReference type="EMBL" id="AM946015">
    <property type="protein sequence ID" value="CAR41764.1"/>
    <property type="molecule type" value="Genomic_DNA"/>
</dbReference>
<dbReference type="RefSeq" id="WP_012658295.1">
    <property type="nucleotide sequence ID" value="NC_012004.1"/>
</dbReference>
<dbReference type="SMR" id="B9DU78"/>
<dbReference type="STRING" id="218495.SUB0778"/>
<dbReference type="GeneID" id="93826062"/>
<dbReference type="KEGG" id="sub:SUB0778"/>
<dbReference type="eggNOG" id="COG0222">
    <property type="taxonomic scope" value="Bacteria"/>
</dbReference>
<dbReference type="HOGENOM" id="CLU_086499_3_2_9"/>
<dbReference type="OrthoDB" id="9811748at2"/>
<dbReference type="Proteomes" id="UP000000449">
    <property type="component" value="Chromosome"/>
</dbReference>
<dbReference type="GO" id="GO:0022625">
    <property type="term" value="C:cytosolic large ribosomal subunit"/>
    <property type="evidence" value="ECO:0007669"/>
    <property type="project" value="TreeGrafter"/>
</dbReference>
<dbReference type="GO" id="GO:0003729">
    <property type="term" value="F:mRNA binding"/>
    <property type="evidence" value="ECO:0007669"/>
    <property type="project" value="TreeGrafter"/>
</dbReference>
<dbReference type="GO" id="GO:0003735">
    <property type="term" value="F:structural constituent of ribosome"/>
    <property type="evidence" value="ECO:0007669"/>
    <property type="project" value="InterPro"/>
</dbReference>
<dbReference type="GO" id="GO:0006412">
    <property type="term" value="P:translation"/>
    <property type="evidence" value="ECO:0007669"/>
    <property type="project" value="UniProtKB-UniRule"/>
</dbReference>
<dbReference type="CDD" id="cd00387">
    <property type="entry name" value="Ribosomal_L7_L12"/>
    <property type="match status" value="1"/>
</dbReference>
<dbReference type="FunFam" id="3.30.1390.10:FF:000001">
    <property type="entry name" value="50S ribosomal protein L7/L12"/>
    <property type="match status" value="1"/>
</dbReference>
<dbReference type="Gene3D" id="3.30.1390.10">
    <property type="match status" value="1"/>
</dbReference>
<dbReference type="Gene3D" id="1.20.5.710">
    <property type="entry name" value="Single helix bin"/>
    <property type="match status" value="1"/>
</dbReference>
<dbReference type="HAMAP" id="MF_00368">
    <property type="entry name" value="Ribosomal_bL12"/>
    <property type="match status" value="1"/>
</dbReference>
<dbReference type="InterPro" id="IPR000206">
    <property type="entry name" value="Ribosomal_bL12"/>
</dbReference>
<dbReference type="InterPro" id="IPR013823">
    <property type="entry name" value="Ribosomal_bL12_C"/>
</dbReference>
<dbReference type="InterPro" id="IPR014719">
    <property type="entry name" value="Ribosomal_bL12_C/ClpS-like"/>
</dbReference>
<dbReference type="InterPro" id="IPR008932">
    <property type="entry name" value="Ribosomal_bL12_oligo"/>
</dbReference>
<dbReference type="InterPro" id="IPR036235">
    <property type="entry name" value="Ribosomal_bL12_oligo_N_sf"/>
</dbReference>
<dbReference type="NCBIfam" id="TIGR00855">
    <property type="entry name" value="L12"/>
    <property type="match status" value="1"/>
</dbReference>
<dbReference type="PANTHER" id="PTHR45987">
    <property type="entry name" value="39S RIBOSOMAL PROTEIN L12"/>
    <property type="match status" value="1"/>
</dbReference>
<dbReference type="PANTHER" id="PTHR45987:SF4">
    <property type="entry name" value="LARGE RIBOSOMAL SUBUNIT PROTEIN BL12M"/>
    <property type="match status" value="1"/>
</dbReference>
<dbReference type="Pfam" id="PF00542">
    <property type="entry name" value="Ribosomal_L12"/>
    <property type="match status" value="1"/>
</dbReference>
<dbReference type="Pfam" id="PF16320">
    <property type="entry name" value="Ribosomal_L12_N"/>
    <property type="match status" value="1"/>
</dbReference>
<dbReference type="SUPFAM" id="SSF54736">
    <property type="entry name" value="ClpS-like"/>
    <property type="match status" value="1"/>
</dbReference>
<dbReference type="SUPFAM" id="SSF48300">
    <property type="entry name" value="Ribosomal protein L7/12, oligomerisation (N-terminal) domain"/>
    <property type="match status" value="1"/>
</dbReference>
<evidence type="ECO:0000255" key="1">
    <source>
        <dbReference type="HAMAP-Rule" id="MF_00368"/>
    </source>
</evidence>
<evidence type="ECO:0000305" key="2"/>